<sequence length="696" mass="75582">MTPTSRTPPERAAELRQLLNQAAHSYYVLDTPTMEDAVYDRLYRELLDLEVKDSSLLTPDSPTQRIGGAPAQGFASVPHRIPLLSLDNAFNVDELTGWYVRLVKLLGYQTNPKTPQPDLSMVGELKIDGNALALSYEHGVLIRAATRGDGANGEEITANVRTIASIPLRLQLVHPPAWLEVRGEAFIPNSTFADINTARGERGDVAFANPRNACAGTLRQLDPKVVASRQLDFFAYTLHLPDNWQAKADDPASPMNQWAVLQWLQAIGFKVNPNTALLTDLTAVEHFFKLWDEARHQLPYATDGVVVKLNDLQLQETAGFTQKAPRWAIALKYAAEEAPSKLLRLTCQVGRTGAVTPVAEFEAIPLAGTSVSRATLHNANRVSELDLHSGDTIVVRKAGEIIPEVIGVLRELRPAGAQTLKLPHICPECRSDLVREEGEAATRCVNNSCPAILRGTLRHWVSKGALDVDGLGSKLIEQLVNRGLVQSIADLYALEASLLASMDRMGNKSTENLITALQASKSKPWHKQLYGLGIHHVGEVNAKALAKKFPSAATLANAACKAPEQITSVFGVGNEIAQSLQQWFATPANQELLAKLKQLGISLEANEDELAHDTDQKQRTVSLQGQTFVLTGTLPTLSRSEAQALIEAAGGKVNSSVSKNTSYVVAGAEAGSKLNKAEKLRVTVLNEEELLKLLAS</sequence>
<accession>A2CDS6</accession>
<name>DNLJ_PROM3</name>
<reference key="1">
    <citation type="journal article" date="2007" name="PLoS Genet.">
        <title>Patterns and implications of gene gain and loss in the evolution of Prochlorococcus.</title>
        <authorList>
            <person name="Kettler G.C."/>
            <person name="Martiny A.C."/>
            <person name="Huang K."/>
            <person name="Zucker J."/>
            <person name="Coleman M.L."/>
            <person name="Rodrigue S."/>
            <person name="Chen F."/>
            <person name="Lapidus A."/>
            <person name="Ferriera S."/>
            <person name="Johnson J."/>
            <person name="Steglich C."/>
            <person name="Church G.M."/>
            <person name="Richardson P."/>
            <person name="Chisholm S.W."/>
        </authorList>
    </citation>
    <scope>NUCLEOTIDE SEQUENCE [LARGE SCALE GENOMIC DNA]</scope>
    <source>
        <strain>MIT 9303</strain>
    </source>
</reference>
<dbReference type="EC" id="6.5.1.2" evidence="1"/>
<dbReference type="EMBL" id="CP000554">
    <property type="protein sequence ID" value="ABM79636.1"/>
    <property type="molecule type" value="Genomic_DNA"/>
</dbReference>
<dbReference type="RefSeq" id="WP_011827475.1">
    <property type="nucleotide sequence ID" value="NC_008820.1"/>
</dbReference>
<dbReference type="SMR" id="A2CDS6"/>
<dbReference type="STRING" id="59922.P9303_29061"/>
<dbReference type="KEGG" id="pmf:P9303_29061"/>
<dbReference type="HOGENOM" id="CLU_007764_2_1_3"/>
<dbReference type="BioCyc" id="PMAR59922:G1G80-2548-MONOMER"/>
<dbReference type="Proteomes" id="UP000002274">
    <property type="component" value="Chromosome"/>
</dbReference>
<dbReference type="GO" id="GO:0005829">
    <property type="term" value="C:cytosol"/>
    <property type="evidence" value="ECO:0007669"/>
    <property type="project" value="TreeGrafter"/>
</dbReference>
<dbReference type="GO" id="GO:0003911">
    <property type="term" value="F:DNA ligase (NAD+) activity"/>
    <property type="evidence" value="ECO:0007669"/>
    <property type="project" value="UniProtKB-UniRule"/>
</dbReference>
<dbReference type="GO" id="GO:0046872">
    <property type="term" value="F:metal ion binding"/>
    <property type="evidence" value="ECO:0007669"/>
    <property type="project" value="UniProtKB-KW"/>
</dbReference>
<dbReference type="GO" id="GO:0006281">
    <property type="term" value="P:DNA repair"/>
    <property type="evidence" value="ECO:0007669"/>
    <property type="project" value="UniProtKB-KW"/>
</dbReference>
<dbReference type="GO" id="GO:0006260">
    <property type="term" value="P:DNA replication"/>
    <property type="evidence" value="ECO:0007669"/>
    <property type="project" value="UniProtKB-KW"/>
</dbReference>
<dbReference type="CDD" id="cd17748">
    <property type="entry name" value="BRCT_DNA_ligase_like"/>
    <property type="match status" value="1"/>
</dbReference>
<dbReference type="CDD" id="cd00114">
    <property type="entry name" value="LIGANc"/>
    <property type="match status" value="1"/>
</dbReference>
<dbReference type="FunFam" id="1.10.150.20:FF:000007">
    <property type="entry name" value="DNA ligase"/>
    <property type="match status" value="1"/>
</dbReference>
<dbReference type="Gene3D" id="6.20.10.30">
    <property type="match status" value="1"/>
</dbReference>
<dbReference type="Gene3D" id="1.10.150.20">
    <property type="entry name" value="5' to 3' exonuclease, C-terminal subdomain"/>
    <property type="match status" value="2"/>
</dbReference>
<dbReference type="Gene3D" id="3.40.50.10190">
    <property type="entry name" value="BRCT domain"/>
    <property type="match status" value="1"/>
</dbReference>
<dbReference type="Gene3D" id="3.30.470.30">
    <property type="entry name" value="DNA ligase/mRNA capping enzyme"/>
    <property type="match status" value="1"/>
</dbReference>
<dbReference type="Gene3D" id="1.10.287.610">
    <property type="entry name" value="Helix hairpin bin"/>
    <property type="match status" value="1"/>
</dbReference>
<dbReference type="Gene3D" id="2.40.50.140">
    <property type="entry name" value="Nucleic acid-binding proteins"/>
    <property type="match status" value="1"/>
</dbReference>
<dbReference type="HAMAP" id="MF_01588">
    <property type="entry name" value="DNA_ligase_A"/>
    <property type="match status" value="1"/>
</dbReference>
<dbReference type="InterPro" id="IPR001357">
    <property type="entry name" value="BRCT_dom"/>
</dbReference>
<dbReference type="InterPro" id="IPR036420">
    <property type="entry name" value="BRCT_dom_sf"/>
</dbReference>
<dbReference type="InterPro" id="IPR041663">
    <property type="entry name" value="DisA/LigA_HHH"/>
</dbReference>
<dbReference type="InterPro" id="IPR001679">
    <property type="entry name" value="DNA_ligase"/>
</dbReference>
<dbReference type="InterPro" id="IPR013839">
    <property type="entry name" value="DNAligase_adenylation"/>
</dbReference>
<dbReference type="InterPro" id="IPR013840">
    <property type="entry name" value="DNAligase_N"/>
</dbReference>
<dbReference type="InterPro" id="IPR012340">
    <property type="entry name" value="NA-bd_OB-fold"/>
</dbReference>
<dbReference type="InterPro" id="IPR004150">
    <property type="entry name" value="NAD_DNA_ligase_OB"/>
</dbReference>
<dbReference type="InterPro" id="IPR010994">
    <property type="entry name" value="RuvA_2-like"/>
</dbReference>
<dbReference type="InterPro" id="IPR004149">
    <property type="entry name" value="Znf_DNAligase_C4"/>
</dbReference>
<dbReference type="NCBIfam" id="TIGR00575">
    <property type="entry name" value="dnlj"/>
    <property type="match status" value="1"/>
</dbReference>
<dbReference type="NCBIfam" id="NF005932">
    <property type="entry name" value="PRK07956.1"/>
    <property type="match status" value="1"/>
</dbReference>
<dbReference type="PANTHER" id="PTHR23389">
    <property type="entry name" value="CHROMOSOME TRANSMISSION FIDELITY FACTOR 18"/>
    <property type="match status" value="1"/>
</dbReference>
<dbReference type="PANTHER" id="PTHR23389:SF9">
    <property type="entry name" value="DNA LIGASE"/>
    <property type="match status" value="1"/>
</dbReference>
<dbReference type="Pfam" id="PF00533">
    <property type="entry name" value="BRCT"/>
    <property type="match status" value="1"/>
</dbReference>
<dbReference type="Pfam" id="PF01653">
    <property type="entry name" value="DNA_ligase_aden"/>
    <property type="match status" value="1"/>
</dbReference>
<dbReference type="Pfam" id="PF03120">
    <property type="entry name" value="DNA_ligase_OB"/>
    <property type="match status" value="1"/>
</dbReference>
<dbReference type="Pfam" id="PF03119">
    <property type="entry name" value="DNA_ligase_ZBD"/>
    <property type="match status" value="1"/>
</dbReference>
<dbReference type="Pfam" id="PF12826">
    <property type="entry name" value="HHH_2"/>
    <property type="match status" value="1"/>
</dbReference>
<dbReference type="Pfam" id="PF14520">
    <property type="entry name" value="HHH_5"/>
    <property type="match status" value="1"/>
</dbReference>
<dbReference type="PIRSF" id="PIRSF001604">
    <property type="entry name" value="LigA"/>
    <property type="match status" value="1"/>
</dbReference>
<dbReference type="SMART" id="SM00292">
    <property type="entry name" value="BRCT"/>
    <property type="match status" value="1"/>
</dbReference>
<dbReference type="SMART" id="SM00532">
    <property type="entry name" value="LIGANc"/>
    <property type="match status" value="1"/>
</dbReference>
<dbReference type="SUPFAM" id="SSF52113">
    <property type="entry name" value="BRCT domain"/>
    <property type="match status" value="1"/>
</dbReference>
<dbReference type="SUPFAM" id="SSF56091">
    <property type="entry name" value="DNA ligase/mRNA capping enzyme, catalytic domain"/>
    <property type="match status" value="1"/>
</dbReference>
<dbReference type="SUPFAM" id="SSF50249">
    <property type="entry name" value="Nucleic acid-binding proteins"/>
    <property type="match status" value="1"/>
</dbReference>
<dbReference type="SUPFAM" id="SSF47781">
    <property type="entry name" value="RuvA domain 2-like"/>
    <property type="match status" value="1"/>
</dbReference>
<dbReference type="PROSITE" id="PS50172">
    <property type="entry name" value="BRCT"/>
    <property type="match status" value="1"/>
</dbReference>
<keyword id="KW-0227">DNA damage</keyword>
<keyword id="KW-0234">DNA repair</keyword>
<keyword id="KW-0235">DNA replication</keyword>
<keyword id="KW-0436">Ligase</keyword>
<keyword id="KW-0460">Magnesium</keyword>
<keyword id="KW-0464">Manganese</keyword>
<keyword id="KW-0479">Metal-binding</keyword>
<keyword id="KW-0520">NAD</keyword>
<keyword id="KW-0862">Zinc</keyword>
<comment type="function">
    <text evidence="1">DNA ligase that catalyzes the formation of phosphodiester linkages between 5'-phosphoryl and 3'-hydroxyl groups in double-stranded DNA using NAD as a coenzyme and as the energy source for the reaction. It is essential for DNA replication and repair of damaged DNA.</text>
</comment>
<comment type="catalytic activity">
    <reaction evidence="1">
        <text>NAD(+) + (deoxyribonucleotide)n-3'-hydroxyl + 5'-phospho-(deoxyribonucleotide)m = (deoxyribonucleotide)n+m + AMP + beta-nicotinamide D-nucleotide.</text>
        <dbReference type="EC" id="6.5.1.2"/>
    </reaction>
</comment>
<comment type="cofactor">
    <cofactor evidence="1">
        <name>Mg(2+)</name>
        <dbReference type="ChEBI" id="CHEBI:18420"/>
    </cofactor>
    <cofactor evidence="1">
        <name>Mn(2+)</name>
        <dbReference type="ChEBI" id="CHEBI:29035"/>
    </cofactor>
</comment>
<comment type="similarity">
    <text evidence="1">Belongs to the NAD-dependent DNA ligase family. LigA subfamily.</text>
</comment>
<evidence type="ECO:0000255" key="1">
    <source>
        <dbReference type="HAMAP-Rule" id="MF_01588"/>
    </source>
</evidence>
<proteinExistence type="inferred from homology"/>
<gene>
    <name evidence="1" type="primary">ligA</name>
    <name type="ordered locus">P9303_29061</name>
</gene>
<protein>
    <recommendedName>
        <fullName evidence="1">DNA ligase</fullName>
        <ecNumber evidence="1">6.5.1.2</ecNumber>
    </recommendedName>
    <alternativeName>
        <fullName evidence="1">Polydeoxyribonucleotide synthase [NAD(+)]</fullName>
    </alternativeName>
</protein>
<organism>
    <name type="scientific">Prochlorococcus marinus (strain MIT 9303)</name>
    <dbReference type="NCBI Taxonomy" id="59922"/>
    <lineage>
        <taxon>Bacteria</taxon>
        <taxon>Bacillati</taxon>
        <taxon>Cyanobacteriota</taxon>
        <taxon>Cyanophyceae</taxon>
        <taxon>Synechococcales</taxon>
        <taxon>Prochlorococcaceae</taxon>
        <taxon>Prochlorococcus</taxon>
    </lineage>
</organism>
<feature type="chain" id="PRO_0000313365" description="DNA ligase">
    <location>
        <begin position="1"/>
        <end position="696"/>
    </location>
</feature>
<feature type="domain" description="BRCT" evidence="1">
    <location>
        <begin position="618"/>
        <end position="696"/>
    </location>
</feature>
<feature type="active site" description="N6-AMP-lysine intermediate" evidence="1">
    <location>
        <position position="126"/>
    </location>
</feature>
<feature type="binding site" evidence="1">
    <location>
        <begin position="36"/>
        <end position="40"/>
    </location>
    <ligand>
        <name>NAD(+)</name>
        <dbReference type="ChEBI" id="CHEBI:57540"/>
    </ligand>
</feature>
<feature type="binding site" evidence="1">
    <location>
        <begin position="85"/>
        <end position="86"/>
    </location>
    <ligand>
        <name>NAD(+)</name>
        <dbReference type="ChEBI" id="CHEBI:57540"/>
    </ligand>
</feature>
<feature type="binding site" evidence="1">
    <location>
        <position position="124"/>
    </location>
    <ligand>
        <name>NAD(+)</name>
        <dbReference type="ChEBI" id="CHEBI:57540"/>
    </ligand>
</feature>
<feature type="binding site" evidence="1">
    <location>
        <position position="147"/>
    </location>
    <ligand>
        <name>NAD(+)</name>
        <dbReference type="ChEBI" id="CHEBI:57540"/>
    </ligand>
</feature>
<feature type="binding site" evidence="1">
    <location>
        <position position="184"/>
    </location>
    <ligand>
        <name>NAD(+)</name>
        <dbReference type="ChEBI" id="CHEBI:57540"/>
    </ligand>
</feature>
<feature type="binding site" evidence="1">
    <location>
        <position position="308"/>
    </location>
    <ligand>
        <name>NAD(+)</name>
        <dbReference type="ChEBI" id="CHEBI:57540"/>
    </ligand>
</feature>
<feature type="binding site" evidence="1">
    <location>
        <position position="332"/>
    </location>
    <ligand>
        <name>NAD(+)</name>
        <dbReference type="ChEBI" id="CHEBI:57540"/>
    </ligand>
</feature>
<feature type="binding site" evidence="1">
    <location>
        <position position="426"/>
    </location>
    <ligand>
        <name>Zn(2+)</name>
        <dbReference type="ChEBI" id="CHEBI:29105"/>
    </ligand>
</feature>
<feature type="binding site" evidence="1">
    <location>
        <position position="429"/>
    </location>
    <ligand>
        <name>Zn(2+)</name>
        <dbReference type="ChEBI" id="CHEBI:29105"/>
    </ligand>
</feature>
<feature type="binding site" evidence="1">
    <location>
        <position position="444"/>
    </location>
    <ligand>
        <name>Zn(2+)</name>
        <dbReference type="ChEBI" id="CHEBI:29105"/>
    </ligand>
</feature>
<feature type="binding site" evidence="1">
    <location>
        <position position="449"/>
    </location>
    <ligand>
        <name>Zn(2+)</name>
        <dbReference type="ChEBI" id="CHEBI:29105"/>
    </ligand>
</feature>